<evidence type="ECO:0000255" key="1">
    <source>
        <dbReference type="HAMAP-Rule" id="MF_00108"/>
    </source>
</evidence>
<comment type="function">
    <text evidence="1">Catalyzes the formation of 4-diphosphocytidyl-2-C-methyl-D-erythritol from CTP and 2-C-methyl-D-erythritol 4-phosphate (MEP).</text>
</comment>
<comment type="catalytic activity">
    <reaction evidence="1">
        <text>2-C-methyl-D-erythritol 4-phosphate + CTP + H(+) = 4-CDP-2-C-methyl-D-erythritol + diphosphate</text>
        <dbReference type="Rhea" id="RHEA:13429"/>
        <dbReference type="ChEBI" id="CHEBI:15378"/>
        <dbReference type="ChEBI" id="CHEBI:33019"/>
        <dbReference type="ChEBI" id="CHEBI:37563"/>
        <dbReference type="ChEBI" id="CHEBI:57823"/>
        <dbReference type="ChEBI" id="CHEBI:58262"/>
        <dbReference type="EC" id="2.7.7.60"/>
    </reaction>
</comment>
<comment type="pathway">
    <text evidence="1">Isoprenoid biosynthesis; isopentenyl diphosphate biosynthesis via DXP pathway; isopentenyl diphosphate from 1-deoxy-D-xylulose 5-phosphate: step 2/6.</text>
</comment>
<comment type="similarity">
    <text evidence="1">Belongs to the IspD/TarI cytidylyltransferase family. IspD subfamily.</text>
</comment>
<feature type="chain" id="PRO_1000191052" description="2-C-methyl-D-erythritol 4-phosphate cytidylyltransferase">
    <location>
        <begin position="1"/>
        <end position="224"/>
    </location>
</feature>
<feature type="site" description="Transition state stabilizer" evidence="1">
    <location>
        <position position="14"/>
    </location>
</feature>
<feature type="site" description="Transition state stabilizer" evidence="1">
    <location>
        <position position="21"/>
    </location>
</feature>
<feature type="site" description="Positions MEP for the nucleophilic attack" evidence="1">
    <location>
        <position position="152"/>
    </location>
</feature>
<feature type="site" description="Positions MEP for the nucleophilic attack" evidence="1">
    <location>
        <position position="208"/>
    </location>
</feature>
<name>ISPD_CLOBB</name>
<sequence length="224" mass="25180">MVSAIVVAGGKGKRMGTVQSKQYLSLNGKPILYYTIKSFLDCKLVDNIILVVPSHEIDYCEKEILEKNSLKVNKIVAGGDERYDSVYNGLIEAKGSDIVLIHDGVRPFVSKETIENAIKYSEEYGAAAPGVMPKDTIKIIDDNRFSIDTPNRSHLISVQTPQAFKFDLIYDCHKKIKNENVNITDDTMVAEYFGNKVYIYPGEYTNIKITTPEDLIIGEYLVNR</sequence>
<dbReference type="EC" id="2.7.7.60" evidence="1"/>
<dbReference type="EMBL" id="CP001056">
    <property type="protein sequence ID" value="ACD23811.1"/>
    <property type="molecule type" value="Genomic_DNA"/>
</dbReference>
<dbReference type="SMR" id="B2TIF4"/>
<dbReference type="KEGG" id="cbk:CLL_A0216"/>
<dbReference type="PATRIC" id="fig|935198.13.peg.190"/>
<dbReference type="HOGENOM" id="CLU_061281_2_2_9"/>
<dbReference type="UniPathway" id="UPA00056">
    <property type="reaction ID" value="UER00093"/>
</dbReference>
<dbReference type="Proteomes" id="UP000001195">
    <property type="component" value="Chromosome"/>
</dbReference>
<dbReference type="GO" id="GO:0050518">
    <property type="term" value="F:2-C-methyl-D-erythritol 4-phosphate cytidylyltransferase activity"/>
    <property type="evidence" value="ECO:0007669"/>
    <property type="project" value="UniProtKB-UniRule"/>
</dbReference>
<dbReference type="GO" id="GO:0019288">
    <property type="term" value="P:isopentenyl diphosphate biosynthetic process, methylerythritol 4-phosphate pathway"/>
    <property type="evidence" value="ECO:0007669"/>
    <property type="project" value="UniProtKB-UniRule"/>
</dbReference>
<dbReference type="CDD" id="cd02516">
    <property type="entry name" value="CDP-ME_synthetase"/>
    <property type="match status" value="1"/>
</dbReference>
<dbReference type="FunFam" id="3.90.550.10:FF:000003">
    <property type="entry name" value="2-C-methyl-D-erythritol 4-phosphate cytidylyltransferase"/>
    <property type="match status" value="1"/>
</dbReference>
<dbReference type="Gene3D" id="3.90.550.10">
    <property type="entry name" value="Spore Coat Polysaccharide Biosynthesis Protein SpsA, Chain A"/>
    <property type="match status" value="1"/>
</dbReference>
<dbReference type="HAMAP" id="MF_00108">
    <property type="entry name" value="IspD"/>
    <property type="match status" value="1"/>
</dbReference>
<dbReference type="InterPro" id="IPR001228">
    <property type="entry name" value="IspD"/>
</dbReference>
<dbReference type="InterPro" id="IPR034683">
    <property type="entry name" value="IspD/TarI"/>
</dbReference>
<dbReference type="InterPro" id="IPR050088">
    <property type="entry name" value="IspD/TarI_cytidylyltransf_bact"/>
</dbReference>
<dbReference type="InterPro" id="IPR018294">
    <property type="entry name" value="ISPD_synthase_CS"/>
</dbReference>
<dbReference type="InterPro" id="IPR029044">
    <property type="entry name" value="Nucleotide-diphossugar_trans"/>
</dbReference>
<dbReference type="NCBIfam" id="TIGR00453">
    <property type="entry name" value="ispD"/>
    <property type="match status" value="1"/>
</dbReference>
<dbReference type="PANTHER" id="PTHR32125">
    <property type="entry name" value="2-C-METHYL-D-ERYTHRITOL 4-PHOSPHATE CYTIDYLYLTRANSFERASE, CHLOROPLASTIC"/>
    <property type="match status" value="1"/>
</dbReference>
<dbReference type="PANTHER" id="PTHR32125:SF4">
    <property type="entry name" value="2-C-METHYL-D-ERYTHRITOL 4-PHOSPHATE CYTIDYLYLTRANSFERASE, CHLOROPLASTIC"/>
    <property type="match status" value="1"/>
</dbReference>
<dbReference type="Pfam" id="PF01128">
    <property type="entry name" value="IspD"/>
    <property type="match status" value="1"/>
</dbReference>
<dbReference type="SUPFAM" id="SSF53448">
    <property type="entry name" value="Nucleotide-diphospho-sugar transferases"/>
    <property type="match status" value="1"/>
</dbReference>
<dbReference type="PROSITE" id="PS01295">
    <property type="entry name" value="ISPD"/>
    <property type="match status" value="1"/>
</dbReference>
<keyword id="KW-0414">Isoprene biosynthesis</keyword>
<keyword id="KW-0548">Nucleotidyltransferase</keyword>
<keyword id="KW-0808">Transferase</keyword>
<reference key="1">
    <citation type="submission" date="2008-04" db="EMBL/GenBank/DDBJ databases">
        <title>Complete sequence of Clostridium botulinum strain Eklund.</title>
        <authorList>
            <person name="Brinkac L.M."/>
            <person name="Brown J.L."/>
            <person name="Bruce D."/>
            <person name="Detter C."/>
            <person name="Munk C."/>
            <person name="Smith L.A."/>
            <person name="Smith T.J."/>
            <person name="Sutton G."/>
            <person name="Brettin T.S."/>
        </authorList>
    </citation>
    <scope>NUCLEOTIDE SEQUENCE [LARGE SCALE GENOMIC DNA]</scope>
    <source>
        <strain>Eklund 17B / Type B</strain>
    </source>
</reference>
<gene>
    <name evidence="1" type="primary">ispD</name>
    <name type="ordered locus">CLL_A0216</name>
</gene>
<proteinExistence type="inferred from homology"/>
<accession>B2TIF4</accession>
<protein>
    <recommendedName>
        <fullName evidence="1">2-C-methyl-D-erythritol 4-phosphate cytidylyltransferase</fullName>
        <ecNumber evidence="1">2.7.7.60</ecNumber>
    </recommendedName>
    <alternativeName>
        <fullName evidence="1">4-diphosphocytidyl-2C-methyl-D-erythritol synthase</fullName>
    </alternativeName>
    <alternativeName>
        <fullName evidence="1">MEP cytidylyltransferase</fullName>
        <shortName evidence="1">MCT</shortName>
    </alternativeName>
</protein>
<organism>
    <name type="scientific">Clostridium botulinum (strain Eklund 17B / Type B)</name>
    <dbReference type="NCBI Taxonomy" id="935198"/>
    <lineage>
        <taxon>Bacteria</taxon>
        <taxon>Bacillati</taxon>
        <taxon>Bacillota</taxon>
        <taxon>Clostridia</taxon>
        <taxon>Eubacteriales</taxon>
        <taxon>Clostridiaceae</taxon>
        <taxon>Clostridium</taxon>
    </lineage>
</organism>